<organism>
    <name type="scientific">Aspidistra elatior</name>
    <name type="common">Cast-iron plant</name>
    <name type="synonym">Barroom plant</name>
    <dbReference type="NCBI Taxonomy" id="39526"/>
    <lineage>
        <taxon>Eukaryota</taxon>
        <taxon>Viridiplantae</taxon>
        <taxon>Streptophyta</taxon>
        <taxon>Embryophyta</taxon>
        <taxon>Tracheophyta</taxon>
        <taxon>Spermatophyta</taxon>
        <taxon>Magnoliopsida</taxon>
        <taxon>Liliopsida</taxon>
        <taxon>Asparagales</taxon>
        <taxon>Asparagaceae</taxon>
        <taxon>Nolinoideae</taxon>
        <taxon>Aspidistra</taxon>
    </lineage>
</organism>
<keyword id="KW-0066">ATP synthesis</keyword>
<keyword id="KW-0067">ATP-binding</keyword>
<keyword id="KW-0139">CF(1)</keyword>
<keyword id="KW-0150">Chloroplast</keyword>
<keyword id="KW-0375">Hydrogen ion transport</keyword>
<keyword id="KW-0406">Ion transport</keyword>
<keyword id="KW-0472">Membrane</keyword>
<keyword id="KW-0547">Nucleotide-binding</keyword>
<keyword id="KW-0934">Plastid</keyword>
<keyword id="KW-0793">Thylakoid</keyword>
<keyword id="KW-1278">Translocase</keyword>
<keyword id="KW-0813">Transport</keyword>
<accession>Q95AF8</accession>
<evidence type="ECO:0000255" key="1">
    <source>
        <dbReference type="HAMAP-Rule" id="MF_01347"/>
    </source>
</evidence>
<geneLocation type="chloroplast"/>
<protein>
    <recommendedName>
        <fullName evidence="1">ATP synthase subunit beta, chloroplastic</fullName>
        <ecNumber evidence="1">7.1.2.2</ecNumber>
    </recommendedName>
    <alternativeName>
        <fullName evidence="1">ATP synthase F1 sector subunit beta</fullName>
    </alternativeName>
    <alternativeName>
        <fullName evidence="1">F-ATPase subunit beta</fullName>
    </alternativeName>
</protein>
<name>ATPB_ASPEL</name>
<gene>
    <name evidence="1" type="primary">atpB</name>
</gene>
<feature type="chain" id="PRO_0000254444" description="ATP synthase subunit beta, chloroplastic">
    <location>
        <begin position="1"/>
        <end position="498"/>
    </location>
</feature>
<feature type="binding site" evidence="1">
    <location>
        <begin position="172"/>
        <end position="179"/>
    </location>
    <ligand>
        <name>ATP</name>
        <dbReference type="ChEBI" id="CHEBI:30616"/>
    </ligand>
</feature>
<dbReference type="EC" id="7.1.2.2" evidence="1"/>
<dbReference type="EMBL" id="AJ417575">
    <property type="protein sequence ID" value="CAD10757.1"/>
    <property type="molecule type" value="Genomic_DNA"/>
</dbReference>
<dbReference type="SMR" id="Q95AF8"/>
<dbReference type="GO" id="GO:0009535">
    <property type="term" value="C:chloroplast thylakoid membrane"/>
    <property type="evidence" value="ECO:0007669"/>
    <property type="project" value="UniProtKB-SubCell"/>
</dbReference>
<dbReference type="GO" id="GO:0005739">
    <property type="term" value="C:mitochondrion"/>
    <property type="evidence" value="ECO:0007669"/>
    <property type="project" value="GOC"/>
</dbReference>
<dbReference type="GO" id="GO:0045259">
    <property type="term" value="C:proton-transporting ATP synthase complex"/>
    <property type="evidence" value="ECO:0007669"/>
    <property type="project" value="UniProtKB-KW"/>
</dbReference>
<dbReference type="GO" id="GO:0005524">
    <property type="term" value="F:ATP binding"/>
    <property type="evidence" value="ECO:0007669"/>
    <property type="project" value="UniProtKB-UniRule"/>
</dbReference>
<dbReference type="GO" id="GO:0016887">
    <property type="term" value="F:ATP hydrolysis activity"/>
    <property type="evidence" value="ECO:0007669"/>
    <property type="project" value="InterPro"/>
</dbReference>
<dbReference type="GO" id="GO:0046933">
    <property type="term" value="F:proton-transporting ATP synthase activity, rotational mechanism"/>
    <property type="evidence" value="ECO:0007669"/>
    <property type="project" value="UniProtKB-UniRule"/>
</dbReference>
<dbReference type="GO" id="GO:0042776">
    <property type="term" value="P:proton motive force-driven mitochondrial ATP synthesis"/>
    <property type="evidence" value="ECO:0007669"/>
    <property type="project" value="TreeGrafter"/>
</dbReference>
<dbReference type="CDD" id="cd18110">
    <property type="entry name" value="ATP-synt_F1_beta_C"/>
    <property type="match status" value="1"/>
</dbReference>
<dbReference type="CDD" id="cd18115">
    <property type="entry name" value="ATP-synt_F1_beta_N"/>
    <property type="match status" value="1"/>
</dbReference>
<dbReference type="CDD" id="cd01133">
    <property type="entry name" value="F1-ATPase_beta_CD"/>
    <property type="match status" value="1"/>
</dbReference>
<dbReference type="FunFam" id="1.10.1140.10:FF:000001">
    <property type="entry name" value="ATP synthase subunit beta"/>
    <property type="match status" value="1"/>
</dbReference>
<dbReference type="FunFam" id="3.40.50.12240:FF:000006">
    <property type="entry name" value="ATP synthase subunit beta"/>
    <property type="match status" value="1"/>
</dbReference>
<dbReference type="FunFam" id="3.40.50.300:FF:000004">
    <property type="entry name" value="ATP synthase subunit beta"/>
    <property type="match status" value="1"/>
</dbReference>
<dbReference type="FunFam" id="2.40.10.170:FF:000002">
    <property type="entry name" value="ATP synthase subunit beta, chloroplastic"/>
    <property type="match status" value="1"/>
</dbReference>
<dbReference type="Gene3D" id="2.40.10.170">
    <property type="match status" value="1"/>
</dbReference>
<dbReference type="Gene3D" id="1.10.1140.10">
    <property type="entry name" value="Bovine Mitochondrial F1-atpase, Atp Synthase Beta Chain, Chain D, domain 3"/>
    <property type="match status" value="1"/>
</dbReference>
<dbReference type="Gene3D" id="3.40.50.300">
    <property type="entry name" value="P-loop containing nucleotide triphosphate hydrolases"/>
    <property type="match status" value="1"/>
</dbReference>
<dbReference type="HAMAP" id="MF_01347">
    <property type="entry name" value="ATP_synth_beta_bact"/>
    <property type="match status" value="1"/>
</dbReference>
<dbReference type="InterPro" id="IPR003593">
    <property type="entry name" value="AAA+_ATPase"/>
</dbReference>
<dbReference type="InterPro" id="IPR055190">
    <property type="entry name" value="ATP-synt_VA_C"/>
</dbReference>
<dbReference type="InterPro" id="IPR005722">
    <property type="entry name" value="ATP_synth_F1_bsu"/>
</dbReference>
<dbReference type="InterPro" id="IPR020003">
    <property type="entry name" value="ATPase_a/bsu_AS"/>
</dbReference>
<dbReference type="InterPro" id="IPR050053">
    <property type="entry name" value="ATPase_alpha/beta_chains"/>
</dbReference>
<dbReference type="InterPro" id="IPR004100">
    <property type="entry name" value="ATPase_F1/V1/A1_a/bsu_N"/>
</dbReference>
<dbReference type="InterPro" id="IPR036121">
    <property type="entry name" value="ATPase_F1/V1/A1_a/bsu_N_sf"/>
</dbReference>
<dbReference type="InterPro" id="IPR000194">
    <property type="entry name" value="ATPase_F1/V1/A1_a/bsu_nucl-bd"/>
</dbReference>
<dbReference type="InterPro" id="IPR024034">
    <property type="entry name" value="ATPase_F1/V1_b/a_C"/>
</dbReference>
<dbReference type="InterPro" id="IPR027417">
    <property type="entry name" value="P-loop_NTPase"/>
</dbReference>
<dbReference type="NCBIfam" id="TIGR01039">
    <property type="entry name" value="atpD"/>
    <property type="match status" value="1"/>
</dbReference>
<dbReference type="PANTHER" id="PTHR15184">
    <property type="entry name" value="ATP SYNTHASE"/>
    <property type="match status" value="1"/>
</dbReference>
<dbReference type="PANTHER" id="PTHR15184:SF71">
    <property type="entry name" value="ATP SYNTHASE SUBUNIT BETA, MITOCHONDRIAL"/>
    <property type="match status" value="1"/>
</dbReference>
<dbReference type="Pfam" id="PF00006">
    <property type="entry name" value="ATP-synt_ab"/>
    <property type="match status" value="1"/>
</dbReference>
<dbReference type="Pfam" id="PF02874">
    <property type="entry name" value="ATP-synt_ab_N"/>
    <property type="match status" value="1"/>
</dbReference>
<dbReference type="Pfam" id="PF22919">
    <property type="entry name" value="ATP-synt_VA_C"/>
    <property type="match status" value="1"/>
</dbReference>
<dbReference type="SMART" id="SM00382">
    <property type="entry name" value="AAA"/>
    <property type="match status" value="1"/>
</dbReference>
<dbReference type="SUPFAM" id="SSF47917">
    <property type="entry name" value="C-terminal domain of alpha and beta subunits of F1 ATP synthase"/>
    <property type="match status" value="1"/>
</dbReference>
<dbReference type="SUPFAM" id="SSF50615">
    <property type="entry name" value="N-terminal domain of alpha and beta subunits of F1 ATP synthase"/>
    <property type="match status" value="1"/>
</dbReference>
<dbReference type="SUPFAM" id="SSF52540">
    <property type="entry name" value="P-loop containing nucleoside triphosphate hydrolases"/>
    <property type="match status" value="1"/>
</dbReference>
<dbReference type="PROSITE" id="PS00152">
    <property type="entry name" value="ATPASE_ALPHA_BETA"/>
    <property type="match status" value="1"/>
</dbReference>
<proteinExistence type="inferred from homology"/>
<sequence>MRFNPTTSGPAVSTLDEKNLGRIAQIIGPVLDVVFPPGKMPNIYNALVVKGRDTVGQQINVTCEVQQLLGNNRVRAVAMSATDGLTRGMEVIDTGAPLSVPVGGATLGRIFNVLGEPVDNLGPVDTRTTSPIHRSAPAFIQLDTKLSIFETGIKVVDLLAPYRRGGKIGLFGGAGVGKTVLIMELINNIAKAHGGVSVFGGVGERTREGNDLYMEMKESGVINEKNIAESKVALVYGQMNEPPGARMRVGLTALTMAEYFRDVNEQDVLLFIDNIFRFVQAGSEVSALLGRMPSAVGYQPTLSTEMGSLQERITSTKEGSITSIQAVYVPADDLTDPAPATTFAHLDATTVLSRGLAAKGIYPAVDPLDSTSTMLQPGIVGEEHYETAQKVKQTLQRYKELQDIIAILGLDELSEEDRLTVARARKIERFLSQPFFVAEVFTGSPGKYVGLAETVRGFQLILSGELDSLPEQAFYLVGNIDEATAKAMNLERGGNLKK</sequence>
<comment type="function">
    <text evidence="1">Produces ATP from ADP in the presence of a proton gradient across the membrane. The catalytic sites are hosted primarily by the beta subunits.</text>
</comment>
<comment type="catalytic activity">
    <reaction evidence="1">
        <text>ATP + H2O + 4 H(+)(in) = ADP + phosphate + 5 H(+)(out)</text>
        <dbReference type="Rhea" id="RHEA:57720"/>
        <dbReference type="ChEBI" id="CHEBI:15377"/>
        <dbReference type="ChEBI" id="CHEBI:15378"/>
        <dbReference type="ChEBI" id="CHEBI:30616"/>
        <dbReference type="ChEBI" id="CHEBI:43474"/>
        <dbReference type="ChEBI" id="CHEBI:456216"/>
        <dbReference type="EC" id="7.1.2.2"/>
    </reaction>
</comment>
<comment type="subunit">
    <text evidence="1">F-type ATPases have 2 components, CF(1) - the catalytic core - and CF(0) - the membrane proton channel. CF(1) has five subunits: alpha(3), beta(3), gamma(1), delta(1), epsilon(1). CF(0) has four main subunits: a(1), b(1), b'(1) and c(9-12).</text>
</comment>
<comment type="subcellular location">
    <subcellularLocation>
        <location evidence="1">Plastid</location>
        <location evidence="1">Chloroplast thylakoid membrane</location>
        <topology evidence="1">Peripheral membrane protein</topology>
    </subcellularLocation>
</comment>
<comment type="similarity">
    <text evidence="1">Belongs to the ATPase alpha/beta chains family.</text>
</comment>
<reference key="1">
    <citation type="book" date="2000" name="MONOCOTS: SYSTEMATICS AND EVOLUTION">
        <title>Higher-level systematics of the monocotyledons: an assessment of current knowledge and a new classification.</title>
        <editorList>
            <person name="Wilson K.L."/>
            <person name="Morrison D.A."/>
        </editorList>
        <authorList>
            <person name="Chase M.W."/>
        </authorList>
    </citation>
    <scope>NUCLEOTIDE SEQUENCE [GENOMIC DNA]</scope>
</reference>